<name>GHT3_SCHPO</name>
<reference key="1">
    <citation type="journal article" date="2000" name="J. Bacteriol.">
        <title>Multiple hexose transporters of Schizosaccharomyces pombe.</title>
        <authorList>
            <person name="Heiland S."/>
            <person name="Radovanovic N."/>
            <person name="Hoefer M."/>
            <person name="Winderickx J."/>
            <person name="Lichtenberg H."/>
        </authorList>
    </citation>
    <scope>NUCLEOTIDE SEQUENCE [GENOMIC DNA]</scope>
    <source>
        <strain>972 / ATCC 24843</strain>
    </source>
</reference>
<reference key="2">
    <citation type="journal article" date="2002" name="Nature">
        <title>The genome sequence of Schizosaccharomyces pombe.</title>
        <authorList>
            <person name="Wood V."/>
            <person name="Gwilliam R."/>
            <person name="Rajandream M.A."/>
            <person name="Lyne M.H."/>
            <person name="Lyne R."/>
            <person name="Stewart A."/>
            <person name="Sgouros J.G."/>
            <person name="Peat N."/>
            <person name="Hayles J."/>
            <person name="Baker S.G."/>
            <person name="Basham D."/>
            <person name="Bowman S."/>
            <person name="Brooks K."/>
            <person name="Brown D."/>
            <person name="Brown S."/>
            <person name="Chillingworth T."/>
            <person name="Churcher C.M."/>
            <person name="Collins M."/>
            <person name="Connor R."/>
            <person name="Cronin A."/>
            <person name="Davis P."/>
            <person name="Feltwell T."/>
            <person name="Fraser A."/>
            <person name="Gentles S."/>
            <person name="Goble A."/>
            <person name="Hamlin N."/>
            <person name="Harris D.E."/>
            <person name="Hidalgo J."/>
            <person name="Hodgson G."/>
            <person name="Holroyd S."/>
            <person name="Hornsby T."/>
            <person name="Howarth S."/>
            <person name="Huckle E.J."/>
            <person name="Hunt S."/>
            <person name="Jagels K."/>
            <person name="James K.D."/>
            <person name="Jones L."/>
            <person name="Jones M."/>
            <person name="Leather S."/>
            <person name="McDonald S."/>
            <person name="McLean J."/>
            <person name="Mooney P."/>
            <person name="Moule S."/>
            <person name="Mungall K.L."/>
            <person name="Murphy L.D."/>
            <person name="Niblett D."/>
            <person name="Odell C."/>
            <person name="Oliver K."/>
            <person name="O'Neil S."/>
            <person name="Pearson D."/>
            <person name="Quail M.A."/>
            <person name="Rabbinowitsch E."/>
            <person name="Rutherford K.M."/>
            <person name="Rutter S."/>
            <person name="Saunders D."/>
            <person name="Seeger K."/>
            <person name="Sharp S."/>
            <person name="Skelton J."/>
            <person name="Simmonds M.N."/>
            <person name="Squares R."/>
            <person name="Squares S."/>
            <person name="Stevens K."/>
            <person name="Taylor K."/>
            <person name="Taylor R.G."/>
            <person name="Tivey A."/>
            <person name="Walsh S.V."/>
            <person name="Warren T."/>
            <person name="Whitehead S."/>
            <person name="Woodward J.R."/>
            <person name="Volckaert G."/>
            <person name="Aert R."/>
            <person name="Robben J."/>
            <person name="Grymonprez B."/>
            <person name="Weltjens I."/>
            <person name="Vanstreels E."/>
            <person name="Rieger M."/>
            <person name="Schaefer M."/>
            <person name="Mueller-Auer S."/>
            <person name="Gabel C."/>
            <person name="Fuchs M."/>
            <person name="Duesterhoeft A."/>
            <person name="Fritzc C."/>
            <person name="Holzer E."/>
            <person name="Moestl D."/>
            <person name="Hilbert H."/>
            <person name="Borzym K."/>
            <person name="Langer I."/>
            <person name="Beck A."/>
            <person name="Lehrach H."/>
            <person name="Reinhardt R."/>
            <person name="Pohl T.M."/>
            <person name="Eger P."/>
            <person name="Zimmermann W."/>
            <person name="Wedler H."/>
            <person name="Wambutt R."/>
            <person name="Purnelle B."/>
            <person name="Goffeau A."/>
            <person name="Cadieu E."/>
            <person name="Dreano S."/>
            <person name="Gloux S."/>
            <person name="Lelaure V."/>
            <person name="Mottier S."/>
            <person name="Galibert F."/>
            <person name="Aves S.J."/>
            <person name="Xiang Z."/>
            <person name="Hunt C."/>
            <person name="Moore K."/>
            <person name="Hurst S.M."/>
            <person name="Lucas M."/>
            <person name="Rochet M."/>
            <person name="Gaillardin C."/>
            <person name="Tallada V.A."/>
            <person name="Garzon A."/>
            <person name="Thode G."/>
            <person name="Daga R.R."/>
            <person name="Cruzado L."/>
            <person name="Jimenez J."/>
            <person name="Sanchez M."/>
            <person name="del Rey F."/>
            <person name="Benito J."/>
            <person name="Dominguez A."/>
            <person name="Revuelta J.L."/>
            <person name="Moreno S."/>
            <person name="Armstrong J."/>
            <person name="Forsburg S.L."/>
            <person name="Cerutti L."/>
            <person name="Lowe T."/>
            <person name="McCombie W.R."/>
            <person name="Paulsen I."/>
            <person name="Potashkin J."/>
            <person name="Shpakovski G.V."/>
            <person name="Ussery D."/>
            <person name="Barrell B.G."/>
            <person name="Nurse P."/>
        </authorList>
    </citation>
    <scope>NUCLEOTIDE SEQUENCE [LARGE SCALE GENOMIC DNA]</scope>
    <source>
        <strain>972 / ATCC 24843</strain>
    </source>
</reference>
<gene>
    <name type="primary">ght3</name>
    <name type="ORF">SPAC1F8.01</name>
</gene>
<evidence type="ECO:0000255" key="1"/>
<evidence type="ECO:0000256" key="2">
    <source>
        <dbReference type="SAM" id="MobiDB-lite"/>
    </source>
</evidence>
<evidence type="ECO:0000305" key="3"/>
<proteinExistence type="inferred from homology"/>
<comment type="function">
    <text>High-affinity gluconate transporter.</text>
</comment>
<comment type="subcellular location">
    <subcellularLocation>
        <location>Membrane</location>
        <topology>Multi-pass membrane protein</topology>
    </subcellularLocation>
</comment>
<comment type="similarity">
    <text evidence="3">Belongs to the major facilitator superfamily. Sugar transporter (TC 2.A.1.1) family.</text>
</comment>
<keyword id="KW-0325">Glycoprotein</keyword>
<keyword id="KW-0472">Membrane</keyword>
<keyword id="KW-1185">Reference proteome</keyword>
<keyword id="KW-0677">Repeat</keyword>
<keyword id="KW-0762">Sugar transport</keyword>
<keyword id="KW-0812">Transmembrane</keyword>
<keyword id="KW-1133">Transmembrane helix</keyword>
<keyword id="KW-0813">Transport</keyword>
<dbReference type="EMBL" id="AF051139">
    <property type="protein sequence ID" value="AAC63975.1"/>
    <property type="molecule type" value="Genomic_DNA"/>
</dbReference>
<dbReference type="EMBL" id="CU329670">
    <property type="protein sequence ID" value="CAB03595.1"/>
    <property type="molecule type" value="Genomic_DNA"/>
</dbReference>
<dbReference type="PIR" id="T38108">
    <property type="entry name" value="T38108"/>
</dbReference>
<dbReference type="RefSeq" id="NP_592790.1">
    <property type="nucleotide sequence ID" value="NM_001018190.2"/>
</dbReference>
<dbReference type="SMR" id="Q92339"/>
<dbReference type="FunCoup" id="Q92339">
    <property type="interactions" value="318"/>
</dbReference>
<dbReference type="STRING" id="284812.Q92339"/>
<dbReference type="TCDB" id="2.A.1.1.23">
    <property type="family name" value="the major facilitator superfamily (mfs)"/>
</dbReference>
<dbReference type="GlyCosmos" id="Q92339">
    <property type="glycosylation" value="1 site, No reported glycans"/>
</dbReference>
<dbReference type="iPTMnet" id="Q92339"/>
<dbReference type="PaxDb" id="4896-SPAC1F8.01.1"/>
<dbReference type="EnsemblFungi" id="SPAC1F8.01.1">
    <property type="protein sequence ID" value="SPAC1F8.01.1:pep"/>
    <property type="gene ID" value="SPAC1F8.01"/>
</dbReference>
<dbReference type="GeneID" id="2541758"/>
<dbReference type="KEGG" id="spo:2541758"/>
<dbReference type="PomBase" id="SPAC1F8.01">
    <property type="gene designation" value="ght3"/>
</dbReference>
<dbReference type="VEuPathDB" id="FungiDB:SPAC1F8.01"/>
<dbReference type="eggNOG" id="KOG0254">
    <property type="taxonomic scope" value="Eukaryota"/>
</dbReference>
<dbReference type="HOGENOM" id="CLU_001265_30_1_1"/>
<dbReference type="InParanoid" id="Q92339"/>
<dbReference type="OMA" id="YCISIGA"/>
<dbReference type="PhylomeDB" id="Q92339"/>
<dbReference type="PRO" id="PR:Q92339"/>
<dbReference type="Proteomes" id="UP000002485">
    <property type="component" value="Chromosome I"/>
</dbReference>
<dbReference type="GO" id="GO:0005886">
    <property type="term" value="C:plasma membrane"/>
    <property type="evidence" value="ECO:0000314"/>
    <property type="project" value="PomBase"/>
</dbReference>
<dbReference type="GO" id="GO:0031520">
    <property type="term" value="C:plasma membrane of cell tip"/>
    <property type="evidence" value="ECO:0000314"/>
    <property type="project" value="PomBase"/>
</dbReference>
<dbReference type="GO" id="GO:0005351">
    <property type="term" value="F:carbohydrate:proton symporter activity"/>
    <property type="evidence" value="ECO:0000318"/>
    <property type="project" value="GO_Central"/>
</dbReference>
<dbReference type="GO" id="GO:0015128">
    <property type="term" value="F:gluconate transmembrane transporter activity"/>
    <property type="evidence" value="ECO:0000315"/>
    <property type="project" value="PomBase"/>
</dbReference>
<dbReference type="GO" id="GO:0008643">
    <property type="term" value="P:carbohydrate transport"/>
    <property type="evidence" value="ECO:0000318"/>
    <property type="project" value="GO_Central"/>
</dbReference>
<dbReference type="GO" id="GO:0140270">
    <property type="term" value="P:gluconate import across plasma membrane"/>
    <property type="evidence" value="ECO:0000315"/>
    <property type="project" value="PomBase"/>
</dbReference>
<dbReference type="CDD" id="cd17356">
    <property type="entry name" value="MFS_HXT"/>
    <property type="match status" value="1"/>
</dbReference>
<dbReference type="FunFam" id="1.20.1250.20:FF:000044">
    <property type="entry name" value="Hexose transporter Hxt3p"/>
    <property type="match status" value="1"/>
</dbReference>
<dbReference type="Gene3D" id="1.20.1250.20">
    <property type="entry name" value="MFS general substrate transporter like domains"/>
    <property type="match status" value="1"/>
</dbReference>
<dbReference type="InterPro" id="IPR020846">
    <property type="entry name" value="MFS_dom"/>
</dbReference>
<dbReference type="InterPro" id="IPR005828">
    <property type="entry name" value="MFS_sugar_transport-like"/>
</dbReference>
<dbReference type="InterPro" id="IPR050360">
    <property type="entry name" value="MFS_Sugar_Transporters"/>
</dbReference>
<dbReference type="InterPro" id="IPR036259">
    <property type="entry name" value="MFS_trans_sf"/>
</dbReference>
<dbReference type="InterPro" id="IPR003663">
    <property type="entry name" value="Sugar/inositol_transpt"/>
</dbReference>
<dbReference type="InterPro" id="IPR005829">
    <property type="entry name" value="Sugar_transporter_CS"/>
</dbReference>
<dbReference type="NCBIfam" id="TIGR00879">
    <property type="entry name" value="SP"/>
    <property type="match status" value="1"/>
</dbReference>
<dbReference type="PANTHER" id="PTHR48022:SF90">
    <property type="entry name" value="HIGH-AFFINITY GLUCONATE TRANSPORTER GHT3-RELATED"/>
    <property type="match status" value="1"/>
</dbReference>
<dbReference type="PANTHER" id="PTHR48022">
    <property type="entry name" value="PLASTIDIC GLUCOSE TRANSPORTER 4"/>
    <property type="match status" value="1"/>
</dbReference>
<dbReference type="Pfam" id="PF00083">
    <property type="entry name" value="Sugar_tr"/>
    <property type="match status" value="1"/>
</dbReference>
<dbReference type="PRINTS" id="PR00171">
    <property type="entry name" value="SUGRTRNSPORT"/>
</dbReference>
<dbReference type="SUPFAM" id="SSF103473">
    <property type="entry name" value="MFS general substrate transporter"/>
    <property type="match status" value="1"/>
</dbReference>
<dbReference type="PROSITE" id="PS50850">
    <property type="entry name" value="MFS"/>
    <property type="match status" value="1"/>
</dbReference>
<dbReference type="PROSITE" id="PS00216">
    <property type="entry name" value="SUGAR_TRANSPORT_1"/>
    <property type="match status" value="1"/>
</dbReference>
<dbReference type="PROSITE" id="PS00217">
    <property type="entry name" value="SUGAR_TRANSPORT_2"/>
    <property type="match status" value="1"/>
</dbReference>
<accession>Q92339</accession>
<organism>
    <name type="scientific">Schizosaccharomyces pombe (strain 972 / ATCC 24843)</name>
    <name type="common">Fission yeast</name>
    <dbReference type="NCBI Taxonomy" id="284812"/>
    <lineage>
        <taxon>Eukaryota</taxon>
        <taxon>Fungi</taxon>
        <taxon>Dikarya</taxon>
        <taxon>Ascomycota</taxon>
        <taxon>Taphrinomycotina</taxon>
        <taxon>Schizosaccharomycetes</taxon>
        <taxon>Schizosaccharomycetales</taxon>
        <taxon>Schizosaccharomycetaceae</taxon>
        <taxon>Schizosaccharomyces</taxon>
    </lineage>
</organism>
<protein>
    <recommendedName>
        <fullName>High-affinity gluconate transporter ght3</fullName>
    </recommendedName>
    <alternativeName>
        <fullName>Hexose transporter 3</fullName>
    </alternativeName>
</protein>
<sequence>MNRFITSILVVFISMSGWLQGADTGSISGILGMRDFQSRFADRYNPISNSYSYSAWRQALLTGTINAGCLFGAMLSSPFTERIGKKYSICFFSGVYIIAELLLVTAVPSWIQVLVGKILAGVGIGALSVLSPGYQSEVAPPQIRGAVVATYQIFSTGAALVAACINMGTHKLRKTASWRTSFGINMLWGILLMVGVLFLPESPRYLIYKGRDEEALRIMCNMAELSPESEIIQTNFNTIKSDIEIEMAGGKARWIEIFGKDIRYRTCLGFLVMLFRELIGNNYYFYYATQVFKGTGMTDIFLPAVILGAINFGTTFGALYTIDNLGRRNPLIFGAAFQSICFFIYAAVGDRKLIYKNGTSDHRAGSVMIVFSCLFLFSYCCSWGPMGWVIVGETFPIRYRSKCASVATSGNWLGNFMISFFTPFINNAIGFKLGYIYACINLFSSFMIFFLAKETKGLTLEEVNDLYMSNIKPWESYKYVREIESHRIHFSKEEEKREREKSKGIRGQEEEFIENADEDNNDSSSSSGSVVSAVKPRRSAVSNDRFSEDSHPTYI</sequence>
<feature type="chain" id="PRO_0000050411" description="High-affinity gluconate transporter ght3">
    <location>
        <begin position="1"/>
        <end position="555"/>
    </location>
</feature>
<feature type="topological domain" description="Cytoplasmic" evidence="1">
    <location>
        <begin position="1"/>
        <end position="9"/>
    </location>
</feature>
<feature type="transmembrane region" description="Helical; Name=1" evidence="1">
    <location>
        <begin position="10"/>
        <end position="30"/>
    </location>
</feature>
<feature type="topological domain" description="Extracellular" evidence="1">
    <location>
        <begin position="31"/>
        <end position="58"/>
    </location>
</feature>
<feature type="transmembrane region" description="Helical; Name=2" evidence="1">
    <location>
        <begin position="59"/>
        <end position="79"/>
    </location>
</feature>
<feature type="topological domain" description="Cytoplasmic" evidence="1">
    <location>
        <begin position="80"/>
        <end position="87"/>
    </location>
</feature>
<feature type="transmembrane region" description="Helical; Name=3" evidence="1">
    <location>
        <begin position="88"/>
        <end position="108"/>
    </location>
</feature>
<feature type="topological domain" description="Extracellular" evidence="1">
    <location>
        <begin position="109"/>
        <end position="112"/>
    </location>
</feature>
<feature type="transmembrane region" description="Helical; Name=4" evidence="1">
    <location>
        <begin position="113"/>
        <end position="133"/>
    </location>
</feature>
<feature type="topological domain" description="Cytoplasmic" evidence="1">
    <location>
        <begin position="134"/>
        <end position="144"/>
    </location>
</feature>
<feature type="transmembrane region" description="Helical; Name=5" evidence="1">
    <location>
        <begin position="145"/>
        <end position="165"/>
    </location>
</feature>
<feature type="topological domain" description="Extracellular" evidence="1">
    <location>
        <begin position="166"/>
        <end position="179"/>
    </location>
</feature>
<feature type="transmembrane region" description="Helical; Name=6" evidence="1">
    <location>
        <begin position="180"/>
        <end position="200"/>
    </location>
</feature>
<feature type="topological domain" description="Cytoplasmic" evidence="1">
    <location>
        <begin position="201"/>
        <end position="266"/>
    </location>
</feature>
<feature type="transmembrane region" description="Helical; Name=7" evidence="1">
    <location>
        <begin position="267"/>
        <end position="285"/>
    </location>
</feature>
<feature type="topological domain" description="Extracellular" evidence="1">
    <location>
        <begin position="286"/>
        <end position="301"/>
    </location>
</feature>
<feature type="transmembrane region" description="Helical; Name=8" evidence="1">
    <location>
        <begin position="302"/>
        <end position="322"/>
    </location>
</feature>
<feature type="topological domain" description="Cytoplasmic" evidence="1">
    <location>
        <begin position="323"/>
        <end position="328"/>
    </location>
</feature>
<feature type="transmembrane region" description="Helical; Name=9" evidence="1">
    <location>
        <begin position="329"/>
        <end position="349"/>
    </location>
</feature>
<feature type="topological domain" description="Extracellular" evidence="1">
    <location>
        <begin position="350"/>
        <end position="363"/>
    </location>
</feature>
<feature type="transmembrane region" description="Helical; Name=10" evidence="1">
    <location>
        <begin position="364"/>
        <end position="384"/>
    </location>
</feature>
<feature type="topological domain" description="Cytoplasmic" evidence="1">
    <location>
        <begin position="385"/>
        <end position="404"/>
    </location>
</feature>
<feature type="transmembrane region" description="Helical; Name=11" evidence="1">
    <location>
        <begin position="405"/>
        <end position="425"/>
    </location>
</feature>
<feature type="topological domain" description="Extracellular" evidence="1">
    <location>
        <begin position="426"/>
        <end position="432"/>
    </location>
</feature>
<feature type="transmembrane region" description="Helical; Name=12" evidence="1">
    <location>
        <begin position="433"/>
        <end position="453"/>
    </location>
</feature>
<feature type="topological domain" description="Cytoplasmic" evidence="1">
    <location>
        <begin position="454"/>
        <end position="555"/>
    </location>
</feature>
<feature type="region of interest" description="Disordered" evidence="2">
    <location>
        <begin position="492"/>
        <end position="555"/>
    </location>
</feature>
<feature type="compositionally biased region" description="Basic and acidic residues" evidence="2">
    <location>
        <begin position="492"/>
        <end position="509"/>
    </location>
</feature>
<feature type="compositionally biased region" description="Acidic residues" evidence="2">
    <location>
        <begin position="510"/>
        <end position="521"/>
    </location>
</feature>
<feature type="compositionally biased region" description="Low complexity" evidence="2">
    <location>
        <begin position="522"/>
        <end position="534"/>
    </location>
</feature>
<feature type="compositionally biased region" description="Basic and acidic residues" evidence="2">
    <location>
        <begin position="545"/>
        <end position="555"/>
    </location>
</feature>
<feature type="glycosylation site" description="N-linked (GlcNAc...) asparagine" evidence="1">
    <location>
        <position position="357"/>
    </location>
</feature>